<comment type="function">
    <text evidence="1">Plays an important role in the de novo pathway of purine nucleotide biosynthesis. Catalyzes the first committed step in the biosynthesis of AMP from IMP.</text>
</comment>
<comment type="catalytic activity">
    <reaction evidence="1">
        <text>IMP + L-aspartate + GTP = N(6)-(1,2-dicarboxyethyl)-AMP + GDP + phosphate + 2 H(+)</text>
        <dbReference type="Rhea" id="RHEA:15753"/>
        <dbReference type="ChEBI" id="CHEBI:15378"/>
        <dbReference type="ChEBI" id="CHEBI:29991"/>
        <dbReference type="ChEBI" id="CHEBI:37565"/>
        <dbReference type="ChEBI" id="CHEBI:43474"/>
        <dbReference type="ChEBI" id="CHEBI:57567"/>
        <dbReference type="ChEBI" id="CHEBI:58053"/>
        <dbReference type="ChEBI" id="CHEBI:58189"/>
        <dbReference type="EC" id="6.3.4.4"/>
    </reaction>
</comment>
<comment type="cofactor">
    <cofactor evidence="1">
        <name>Mg(2+)</name>
        <dbReference type="ChEBI" id="CHEBI:18420"/>
    </cofactor>
    <text evidence="1">Binds 1 Mg(2+) ion per subunit.</text>
</comment>
<comment type="pathway">
    <text evidence="1">Purine metabolism; AMP biosynthesis via de novo pathway; AMP from IMP: step 1/2.</text>
</comment>
<comment type="subunit">
    <text evidence="1">Homodimer.</text>
</comment>
<comment type="subcellular location">
    <subcellularLocation>
        <location evidence="1">Cytoplasm</location>
    </subcellularLocation>
</comment>
<comment type="similarity">
    <text evidence="1">Belongs to the adenylosuccinate synthetase family.</text>
</comment>
<proteinExistence type="inferred from homology"/>
<reference key="1">
    <citation type="submission" date="2007-02" db="EMBL/GenBank/DDBJ databases">
        <title>Complete sequence of Clostridium thermocellum ATCC 27405.</title>
        <authorList>
            <consortium name="US DOE Joint Genome Institute"/>
            <person name="Copeland A."/>
            <person name="Lucas S."/>
            <person name="Lapidus A."/>
            <person name="Barry K."/>
            <person name="Detter J.C."/>
            <person name="Glavina del Rio T."/>
            <person name="Hammon N."/>
            <person name="Israni S."/>
            <person name="Dalin E."/>
            <person name="Tice H."/>
            <person name="Pitluck S."/>
            <person name="Chertkov O."/>
            <person name="Brettin T."/>
            <person name="Bruce D."/>
            <person name="Han C."/>
            <person name="Tapia R."/>
            <person name="Gilna P."/>
            <person name="Schmutz J."/>
            <person name="Larimer F."/>
            <person name="Land M."/>
            <person name="Hauser L."/>
            <person name="Kyrpides N."/>
            <person name="Mikhailova N."/>
            <person name="Wu J.H.D."/>
            <person name="Newcomb M."/>
            <person name="Richardson P."/>
        </authorList>
    </citation>
    <scope>NUCLEOTIDE SEQUENCE [LARGE SCALE GENOMIC DNA]</scope>
    <source>
        <strain>ATCC 27405 / DSM 1237 / JCM 9322 / NBRC 103400 / NCIMB 10682 / NRRL B-4536 / VPI 7372</strain>
    </source>
</reference>
<organism>
    <name type="scientific">Acetivibrio thermocellus (strain ATCC 27405 / DSM 1237 / JCM 9322 / NBRC 103400 / NCIMB 10682 / NRRL B-4536 / VPI 7372)</name>
    <name type="common">Clostridium thermocellum</name>
    <dbReference type="NCBI Taxonomy" id="203119"/>
    <lineage>
        <taxon>Bacteria</taxon>
        <taxon>Bacillati</taxon>
        <taxon>Bacillota</taxon>
        <taxon>Clostridia</taxon>
        <taxon>Eubacteriales</taxon>
        <taxon>Oscillospiraceae</taxon>
        <taxon>Acetivibrio</taxon>
    </lineage>
</organism>
<accession>A3DK09</accession>
<protein>
    <recommendedName>
        <fullName evidence="1">Adenylosuccinate synthetase</fullName>
        <shortName evidence="1">AMPSase</shortName>
        <shortName evidence="1">AdSS</shortName>
        <ecNumber evidence="1">6.3.4.4</ecNumber>
    </recommendedName>
    <alternativeName>
        <fullName evidence="1">IMP--aspartate ligase</fullName>
    </alternativeName>
</protein>
<gene>
    <name evidence="1" type="primary">purA</name>
    <name type="ordered locus">Cthe_3093</name>
</gene>
<feature type="chain" id="PRO_1000000807" description="Adenylosuccinate synthetase">
    <location>
        <begin position="1"/>
        <end position="424"/>
    </location>
</feature>
<feature type="active site" description="Proton acceptor" evidence="1">
    <location>
        <position position="13"/>
    </location>
</feature>
<feature type="active site" description="Proton donor" evidence="1">
    <location>
        <position position="41"/>
    </location>
</feature>
<feature type="binding site" evidence="1">
    <location>
        <begin position="12"/>
        <end position="18"/>
    </location>
    <ligand>
        <name>GTP</name>
        <dbReference type="ChEBI" id="CHEBI:37565"/>
    </ligand>
</feature>
<feature type="binding site" description="in other chain" evidence="1">
    <location>
        <begin position="13"/>
        <end position="16"/>
    </location>
    <ligand>
        <name>IMP</name>
        <dbReference type="ChEBI" id="CHEBI:58053"/>
        <note>ligand shared between dimeric partners</note>
    </ligand>
</feature>
<feature type="binding site" evidence="1">
    <location>
        <position position="13"/>
    </location>
    <ligand>
        <name>Mg(2+)</name>
        <dbReference type="ChEBI" id="CHEBI:18420"/>
    </ligand>
</feature>
<feature type="binding site" description="in other chain" evidence="1">
    <location>
        <begin position="38"/>
        <end position="41"/>
    </location>
    <ligand>
        <name>IMP</name>
        <dbReference type="ChEBI" id="CHEBI:58053"/>
        <note>ligand shared between dimeric partners</note>
    </ligand>
</feature>
<feature type="binding site" evidence="1">
    <location>
        <begin position="40"/>
        <end position="42"/>
    </location>
    <ligand>
        <name>GTP</name>
        <dbReference type="ChEBI" id="CHEBI:37565"/>
    </ligand>
</feature>
<feature type="binding site" evidence="1">
    <location>
        <position position="40"/>
    </location>
    <ligand>
        <name>Mg(2+)</name>
        <dbReference type="ChEBI" id="CHEBI:18420"/>
    </ligand>
</feature>
<feature type="binding site" description="in other chain" evidence="1">
    <location>
        <position position="128"/>
    </location>
    <ligand>
        <name>IMP</name>
        <dbReference type="ChEBI" id="CHEBI:58053"/>
        <note>ligand shared between dimeric partners</note>
    </ligand>
</feature>
<feature type="binding site" evidence="1">
    <location>
        <position position="142"/>
    </location>
    <ligand>
        <name>IMP</name>
        <dbReference type="ChEBI" id="CHEBI:58053"/>
        <note>ligand shared between dimeric partners</note>
    </ligand>
</feature>
<feature type="binding site" description="in other chain" evidence="1">
    <location>
        <position position="223"/>
    </location>
    <ligand>
        <name>IMP</name>
        <dbReference type="ChEBI" id="CHEBI:58053"/>
        <note>ligand shared between dimeric partners</note>
    </ligand>
</feature>
<feature type="binding site" description="in other chain" evidence="1">
    <location>
        <position position="238"/>
    </location>
    <ligand>
        <name>IMP</name>
        <dbReference type="ChEBI" id="CHEBI:58053"/>
        <note>ligand shared between dimeric partners</note>
    </ligand>
</feature>
<feature type="binding site" evidence="1">
    <location>
        <begin position="298"/>
        <end position="304"/>
    </location>
    <ligand>
        <name>substrate</name>
    </ligand>
</feature>
<feature type="binding site" description="in other chain" evidence="1">
    <location>
        <position position="302"/>
    </location>
    <ligand>
        <name>IMP</name>
        <dbReference type="ChEBI" id="CHEBI:58053"/>
        <note>ligand shared between dimeric partners</note>
    </ligand>
</feature>
<feature type="binding site" evidence="1">
    <location>
        <position position="304"/>
    </location>
    <ligand>
        <name>GTP</name>
        <dbReference type="ChEBI" id="CHEBI:37565"/>
    </ligand>
</feature>
<feature type="binding site" evidence="1">
    <location>
        <begin position="330"/>
        <end position="332"/>
    </location>
    <ligand>
        <name>GTP</name>
        <dbReference type="ChEBI" id="CHEBI:37565"/>
    </ligand>
</feature>
<feature type="binding site" evidence="1">
    <location>
        <begin position="412"/>
        <end position="414"/>
    </location>
    <ligand>
        <name>GTP</name>
        <dbReference type="ChEBI" id="CHEBI:37565"/>
    </ligand>
</feature>
<sequence>MATRVVVGTQWGDEGKGKYIDMLAKDSDMVVRFSGGNNAGHTIVANGVKYALHLIPSGILNEGKTCIIGNGVVVDPAVLLKEIKELNEKGISTDRLLISDRAHVIMPYHKLLDELQEKFRGENSIGTTKRGIGPCYSDKTERSGIRMCDLVDEDEFVRKVRENLKVKNLIIEKVYGGQKLDEEQVISEYLEYGRKLKEYVADVNSIIFEAIEQGKNILFEGAQATFLDLDFGTYPYVTSSNPVAGGVCTGAGVGPVFINEVYGVLKAYTSRVGAGPFPTEQNNEIGDRIRELGWEYGTTTGRPRRCGWLDLVMIKYAARVNGLTALAINHVDTIGKLPKIKLCVAYKKNGQETRNFPCSLKELAQCEPVYEEFDGWDEDISNVKSFDDLPDNAKKYLSRIEEIVGVKIKLIGVGKEREQTIVVN</sequence>
<name>PURA_ACET2</name>
<evidence type="ECO:0000255" key="1">
    <source>
        <dbReference type="HAMAP-Rule" id="MF_00011"/>
    </source>
</evidence>
<dbReference type="EC" id="6.3.4.4" evidence="1"/>
<dbReference type="EMBL" id="CP000568">
    <property type="protein sequence ID" value="ABN54288.1"/>
    <property type="molecule type" value="Genomic_DNA"/>
</dbReference>
<dbReference type="RefSeq" id="WP_003511587.1">
    <property type="nucleotide sequence ID" value="NC_009012.1"/>
</dbReference>
<dbReference type="SMR" id="A3DK09"/>
<dbReference type="STRING" id="203119.Cthe_3093"/>
<dbReference type="GeneID" id="35803977"/>
<dbReference type="KEGG" id="cth:Cthe_3093"/>
<dbReference type="eggNOG" id="COG0104">
    <property type="taxonomic scope" value="Bacteria"/>
</dbReference>
<dbReference type="HOGENOM" id="CLU_029848_0_0_9"/>
<dbReference type="OrthoDB" id="9807553at2"/>
<dbReference type="UniPathway" id="UPA00075">
    <property type="reaction ID" value="UER00335"/>
</dbReference>
<dbReference type="Proteomes" id="UP000002145">
    <property type="component" value="Chromosome"/>
</dbReference>
<dbReference type="GO" id="GO:0005737">
    <property type="term" value="C:cytoplasm"/>
    <property type="evidence" value="ECO:0007669"/>
    <property type="project" value="UniProtKB-SubCell"/>
</dbReference>
<dbReference type="GO" id="GO:0004019">
    <property type="term" value="F:adenylosuccinate synthase activity"/>
    <property type="evidence" value="ECO:0007669"/>
    <property type="project" value="UniProtKB-UniRule"/>
</dbReference>
<dbReference type="GO" id="GO:0005525">
    <property type="term" value="F:GTP binding"/>
    <property type="evidence" value="ECO:0007669"/>
    <property type="project" value="UniProtKB-UniRule"/>
</dbReference>
<dbReference type="GO" id="GO:0000287">
    <property type="term" value="F:magnesium ion binding"/>
    <property type="evidence" value="ECO:0007669"/>
    <property type="project" value="UniProtKB-UniRule"/>
</dbReference>
<dbReference type="GO" id="GO:0044208">
    <property type="term" value="P:'de novo' AMP biosynthetic process"/>
    <property type="evidence" value="ECO:0007669"/>
    <property type="project" value="UniProtKB-UniRule"/>
</dbReference>
<dbReference type="GO" id="GO:0046040">
    <property type="term" value="P:IMP metabolic process"/>
    <property type="evidence" value="ECO:0007669"/>
    <property type="project" value="TreeGrafter"/>
</dbReference>
<dbReference type="CDD" id="cd03108">
    <property type="entry name" value="AdSS"/>
    <property type="match status" value="1"/>
</dbReference>
<dbReference type="FunFam" id="1.10.300.10:FF:000001">
    <property type="entry name" value="Adenylosuccinate synthetase"/>
    <property type="match status" value="1"/>
</dbReference>
<dbReference type="FunFam" id="3.90.170.10:FF:000001">
    <property type="entry name" value="Adenylosuccinate synthetase"/>
    <property type="match status" value="1"/>
</dbReference>
<dbReference type="Gene3D" id="3.40.440.10">
    <property type="entry name" value="Adenylosuccinate Synthetase, subunit A, domain 1"/>
    <property type="match status" value="1"/>
</dbReference>
<dbReference type="Gene3D" id="1.10.300.10">
    <property type="entry name" value="Adenylosuccinate Synthetase, subunit A, domain 2"/>
    <property type="match status" value="1"/>
</dbReference>
<dbReference type="Gene3D" id="3.90.170.10">
    <property type="entry name" value="Adenylosuccinate Synthetase, subunit A, domain 3"/>
    <property type="match status" value="1"/>
</dbReference>
<dbReference type="HAMAP" id="MF_00011">
    <property type="entry name" value="Adenylosucc_synth"/>
    <property type="match status" value="1"/>
</dbReference>
<dbReference type="InterPro" id="IPR018220">
    <property type="entry name" value="Adenylosuccin_syn_GTP-bd"/>
</dbReference>
<dbReference type="InterPro" id="IPR033128">
    <property type="entry name" value="Adenylosuccin_syn_Lys_AS"/>
</dbReference>
<dbReference type="InterPro" id="IPR042109">
    <property type="entry name" value="Adenylosuccinate_synth_dom1"/>
</dbReference>
<dbReference type="InterPro" id="IPR042110">
    <property type="entry name" value="Adenylosuccinate_synth_dom2"/>
</dbReference>
<dbReference type="InterPro" id="IPR042111">
    <property type="entry name" value="Adenylosuccinate_synth_dom3"/>
</dbReference>
<dbReference type="InterPro" id="IPR001114">
    <property type="entry name" value="Adenylosuccinate_synthetase"/>
</dbReference>
<dbReference type="InterPro" id="IPR027417">
    <property type="entry name" value="P-loop_NTPase"/>
</dbReference>
<dbReference type="NCBIfam" id="NF002223">
    <property type="entry name" value="PRK01117.1"/>
    <property type="match status" value="1"/>
</dbReference>
<dbReference type="NCBIfam" id="TIGR00184">
    <property type="entry name" value="purA"/>
    <property type="match status" value="1"/>
</dbReference>
<dbReference type="PANTHER" id="PTHR11846">
    <property type="entry name" value="ADENYLOSUCCINATE SYNTHETASE"/>
    <property type="match status" value="1"/>
</dbReference>
<dbReference type="PANTHER" id="PTHR11846:SF0">
    <property type="entry name" value="ADENYLOSUCCINATE SYNTHETASE"/>
    <property type="match status" value="1"/>
</dbReference>
<dbReference type="Pfam" id="PF00709">
    <property type="entry name" value="Adenylsucc_synt"/>
    <property type="match status" value="1"/>
</dbReference>
<dbReference type="SMART" id="SM00788">
    <property type="entry name" value="Adenylsucc_synt"/>
    <property type="match status" value="1"/>
</dbReference>
<dbReference type="SUPFAM" id="SSF52540">
    <property type="entry name" value="P-loop containing nucleoside triphosphate hydrolases"/>
    <property type="match status" value="1"/>
</dbReference>
<dbReference type="PROSITE" id="PS01266">
    <property type="entry name" value="ADENYLOSUCCIN_SYN_1"/>
    <property type="match status" value="1"/>
</dbReference>
<dbReference type="PROSITE" id="PS00513">
    <property type="entry name" value="ADENYLOSUCCIN_SYN_2"/>
    <property type="match status" value="1"/>
</dbReference>
<keyword id="KW-0963">Cytoplasm</keyword>
<keyword id="KW-0342">GTP-binding</keyword>
<keyword id="KW-0436">Ligase</keyword>
<keyword id="KW-0460">Magnesium</keyword>
<keyword id="KW-0479">Metal-binding</keyword>
<keyword id="KW-0547">Nucleotide-binding</keyword>
<keyword id="KW-0658">Purine biosynthesis</keyword>
<keyword id="KW-1185">Reference proteome</keyword>